<evidence type="ECO:0000250" key="1"/>
<evidence type="ECO:0000255" key="2"/>
<evidence type="ECO:0000255" key="3">
    <source>
        <dbReference type="PROSITE-ProRule" id="PRU00521"/>
    </source>
</evidence>
<evidence type="ECO:0000256" key="4">
    <source>
        <dbReference type="SAM" id="MobiDB-lite"/>
    </source>
</evidence>
<dbReference type="EMBL" id="L78008">
    <property type="protein sequence ID" value="AAA99297.1"/>
    <property type="molecule type" value="mRNA"/>
</dbReference>
<dbReference type="SMR" id="Q90214"/>
<dbReference type="GO" id="GO:0005886">
    <property type="term" value="C:plasma membrane"/>
    <property type="evidence" value="ECO:0000250"/>
    <property type="project" value="UniProtKB"/>
</dbReference>
<dbReference type="GO" id="GO:0004930">
    <property type="term" value="F:G protein-coupled receptor activity"/>
    <property type="evidence" value="ECO:0007669"/>
    <property type="project" value="UniProtKB-KW"/>
</dbReference>
<dbReference type="GO" id="GO:0009881">
    <property type="term" value="F:photoreceptor activity"/>
    <property type="evidence" value="ECO:0007669"/>
    <property type="project" value="UniProtKB-KW"/>
</dbReference>
<dbReference type="GO" id="GO:0007602">
    <property type="term" value="P:phototransduction"/>
    <property type="evidence" value="ECO:0007669"/>
    <property type="project" value="UniProtKB-KW"/>
</dbReference>
<dbReference type="GO" id="GO:0007601">
    <property type="term" value="P:visual perception"/>
    <property type="evidence" value="ECO:0007669"/>
    <property type="project" value="UniProtKB-KW"/>
</dbReference>
<dbReference type="CDD" id="cd15080">
    <property type="entry name" value="7tmA_MWS_opsin"/>
    <property type="match status" value="1"/>
</dbReference>
<dbReference type="FunFam" id="1.20.1070.10:FF:000018">
    <property type="entry name" value="Rhodopsin"/>
    <property type="match status" value="1"/>
</dbReference>
<dbReference type="Gene3D" id="1.20.1070.10">
    <property type="entry name" value="Rhodopsin 7-helix transmembrane proteins"/>
    <property type="match status" value="1"/>
</dbReference>
<dbReference type="InterPro" id="IPR050125">
    <property type="entry name" value="GPCR_opsins"/>
</dbReference>
<dbReference type="InterPro" id="IPR000276">
    <property type="entry name" value="GPCR_Rhodpsn"/>
</dbReference>
<dbReference type="InterPro" id="IPR017452">
    <property type="entry name" value="GPCR_Rhodpsn_7TM"/>
</dbReference>
<dbReference type="InterPro" id="IPR001760">
    <property type="entry name" value="Opsin"/>
</dbReference>
<dbReference type="InterPro" id="IPR027430">
    <property type="entry name" value="Retinal_BS"/>
</dbReference>
<dbReference type="InterPro" id="IPR000732">
    <property type="entry name" value="Rhodopsin"/>
</dbReference>
<dbReference type="InterPro" id="IPR019477">
    <property type="entry name" value="Rhodopsin_N"/>
</dbReference>
<dbReference type="PANTHER" id="PTHR24240">
    <property type="entry name" value="OPSIN"/>
    <property type="match status" value="1"/>
</dbReference>
<dbReference type="Pfam" id="PF00001">
    <property type="entry name" value="7tm_1"/>
    <property type="match status" value="1"/>
</dbReference>
<dbReference type="Pfam" id="PF10413">
    <property type="entry name" value="Rhodopsin_N"/>
    <property type="match status" value="1"/>
</dbReference>
<dbReference type="PRINTS" id="PR00237">
    <property type="entry name" value="GPCRRHODOPSN"/>
</dbReference>
<dbReference type="PRINTS" id="PR00238">
    <property type="entry name" value="OPSIN"/>
</dbReference>
<dbReference type="PRINTS" id="PR00579">
    <property type="entry name" value="RHODOPSIN"/>
</dbReference>
<dbReference type="SUPFAM" id="SSF81321">
    <property type="entry name" value="Family A G protein-coupled receptor-like"/>
    <property type="match status" value="1"/>
</dbReference>
<dbReference type="PROSITE" id="PS00237">
    <property type="entry name" value="G_PROTEIN_RECEP_F1_1"/>
    <property type="match status" value="1"/>
</dbReference>
<dbReference type="PROSITE" id="PS50262">
    <property type="entry name" value="G_PROTEIN_RECEP_F1_2"/>
    <property type="match status" value="1"/>
</dbReference>
<dbReference type="PROSITE" id="PS00238">
    <property type="entry name" value="OPSIN"/>
    <property type="match status" value="1"/>
</dbReference>
<keyword id="KW-0157">Chromophore</keyword>
<keyword id="KW-1015">Disulfide bond</keyword>
<keyword id="KW-0297">G-protein coupled receptor</keyword>
<keyword id="KW-0325">Glycoprotein</keyword>
<keyword id="KW-0449">Lipoprotein</keyword>
<keyword id="KW-0472">Membrane</keyword>
<keyword id="KW-0564">Palmitate</keyword>
<keyword id="KW-0597">Phosphoprotein</keyword>
<keyword id="KW-0600">Photoreceptor protein</keyword>
<keyword id="KW-0675">Receptor</keyword>
<keyword id="KW-0681">Retinal protein</keyword>
<keyword id="KW-0716">Sensory transduction</keyword>
<keyword id="KW-0807">Transducer</keyword>
<keyword id="KW-0812">Transmembrane</keyword>
<keyword id="KW-1133">Transmembrane helix</keyword>
<keyword id="KW-0844">Vision</keyword>
<reference key="1">
    <citation type="journal article" date="1995" name="Proc. R. Soc. B">
        <title>The molecular basis for the green-blue sensitivity shift in the rod visual pigments of the European eel.</title>
        <authorList>
            <person name="Archer S.N."/>
            <person name="Hope A."/>
            <person name="Partridge J.C."/>
        </authorList>
    </citation>
    <scope>NUCLEOTIDE SEQUENCE [MRNA]</scope>
    <source>
        <tissue>Retina</tissue>
    </source>
</reference>
<sequence>MNGTEGPNFYIPMSNITGVVRSPFEYPQYYLAEPWAYTILAAYMFTLILLGFPVNFLTLYVTIEHKKLRTPLNYILLNLAVANLFMVFGGFTTTVYTSMHGYFVFGETGCNLEGYFATLGGEISLWSLVVLAIERWVVVCKPMSNFRFGENHAIMGLAFTWIMANSCAMPPLFGWSRYIPEGMQCSCGVDYYTLKPEVNNESFVIYMFIVHFSVPLTIISFCYGRLVCTVKEAAAQQQESETTQRAEREVTRMVVIMVIAFLVCWVPYASVAWYIFTHQGSTFGPVFMTVPSFFAKSSAIYNPLIYICLNSQFRNCMITTLFCGKNPFQEEEGASTTASKTEASSVSSVSPA</sequence>
<organism>
    <name type="scientific">Anguilla anguilla</name>
    <name type="common">European freshwater eel</name>
    <name type="synonym">Muraena anguilla</name>
    <dbReference type="NCBI Taxonomy" id="7936"/>
    <lineage>
        <taxon>Eukaryota</taxon>
        <taxon>Metazoa</taxon>
        <taxon>Chordata</taxon>
        <taxon>Craniata</taxon>
        <taxon>Vertebrata</taxon>
        <taxon>Euteleostomi</taxon>
        <taxon>Actinopterygii</taxon>
        <taxon>Neopterygii</taxon>
        <taxon>Teleostei</taxon>
        <taxon>Anguilliformes</taxon>
        <taxon>Anguillidae</taxon>
        <taxon>Anguilla</taxon>
    </lineage>
</organism>
<feature type="chain" id="PRO_0000197646" description="Rhodopsin, deep-sea form">
    <location>
        <begin position="1"/>
        <end position="352"/>
    </location>
</feature>
<feature type="topological domain" description="Extracellular" evidence="2">
    <location>
        <begin position="1"/>
        <end position="36"/>
    </location>
</feature>
<feature type="transmembrane region" description="Helical; Name=1" evidence="2">
    <location>
        <begin position="37"/>
        <end position="61"/>
    </location>
</feature>
<feature type="topological domain" description="Cytoplasmic" evidence="2">
    <location>
        <begin position="62"/>
        <end position="73"/>
    </location>
</feature>
<feature type="transmembrane region" description="Helical; Name=2" evidence="2">
    <location>
        <begin position="74"/>
        <end position="98"/>
    </location>
</feature>
<feature type="topological domain" description="Extracellular" evidence="2">
    <location>
        <begin position="99"/>
        <end position="113"/>
    </location>
</feature>
<feature type="transmembrane region" description="Helical; Name=3" evidence="2">
    <location>
        <begin position="114"/>
        <end position="133"/>
    </location>
</feature>
<feature type="topological domain" description="Cytoplasmic" evidence="2">
    <location>
        <begin position="134"/>
        <end position="152"/>
    </location>
</feature>
<feature type="transmembrane region" description="Helical; Name=4" evidence="2">
    <location>
        <begin position="153"/>
        <end position="176"/>
    </location>
</feature>
<feature type="topological domain" description="Extracellular" evidence="2">
    <location>
        <begin position="177"/>
        <end position="202"/>
    </location>
</feature>
<feature type="transmembrane region" description="Helical; Name=5" evidence="2">
    <location>
        <begin position="203"/>
        <end position="230"/>
    </location>
</feature>
<feature type="topological domain" description="Cytoplasmic" evidence="2">
    <location>
        <begin position="231"/>
        <end position="252"/>
    </location>
</feature>
<feature type="transmembrane region" description="Helical; Name=6" evidence="2">
    <location>
        <begin position="253"/>
        <end position="276"/>
    </location>
</feature>
<feature type="topological domain" description="Extracellular" evidence="2">
    <location>
        <begin position="277"/>
        <end position="284"/>
    </location>
</feature>
<feature type="transmembrane region" description="Helical; Name=7" evidence="2">
    <location>
        <begin position="285"/>
        <end position="309"/>
    </location>
</feature>
<feature type="topological domain" description="Cytoplasmic" evidence="2">
    <location>
        <begin position="310"/>
        <end position="352"/>
    </location>
</feature>
<feature type="region of interest" description="Disordered" evidence="4">
    <location>
        <begin position="333"/>
        <end position="352"/>
    </location>
</feature>
<feature type="compositionally biased region" description="Low complexity" evidence="4">
    <location>
        <begin position="334"/>
        <end position="352"/>
    </location>
</feature>
<feature type="modified residue" description="N6-(retinylidene)lysine" evidence="1">
    <location>
        <position position="296"/>
    </location>
</feature>
<feature type="lipid moiety-binding region" description="S-palmitoyl cysteine" evidence="1">
    <location>
        <position position="323"/>
    </location>
</feature>
<feature type="glycosylation site" description="N-linked (GlcNAc...) asparagine" evidence="1">
    <location>
        <position position="2"/>
    </location>
</feature>
<feature type="glycosylation site" description="N-linked (GlcNAc...) asparagine" evidence="1">
    <location>
        <position position="15"/>
    </location>
</feature>
<feature type="glycosylation site" description="N-linked (GlcNAc...) asparagine" evidence="2">
    <location>
        <position position="200"/>
    </location>
</feature>
<feature type="disulfide bond" evidence="3">
    <location>
        <begin position="110"/>
        <end position="187"/>
    </location>
</feature>
<proteinExistence type="evidence at protein level"/>
<accession>Q90214</accession>
<comment type="function">
    <text>Visual pigments such as rhodopsin and porphyropsin are light-absorbing molecules that mediate vision. Rhodopsin consists of an apoprotein, opsin, covalently linked to 11-cis-retinal. This receptor is coupled to the activation of phospholipase C. Porphyropsin consists of opsin covalently linked to 11-cis 3,4-didehydroretinal.</text>
</comment>
<comment type="biophysicochemical properties">
    <absorption>
        <max>~482 nm</max>
    </absorption>
</comment>
<comment type="subcellular location">
    <subcellularLocation>
        <location>Membrane</location>
        <topology>Multi-pass membrane protein</topology>
    </subcellularLocation>
</comment>
<comment type="tissue specificity">
    <text>Rod shaped photoreceptor cells which mediates vision in dim light.</text>
</comment>
<comment type="developmental stage">
    <text>When eel matures sexually and migrates back to deep sea breeding grounds the visual pigments in its rod photoreceptors change from being maximally sensitive to green light to being maximally sensitive to blue light. In part, this change in sensitivity is due to a change in the opsin component of the visual pigment molecule; this blue sensitive rhodopsin is expressed during life in bluer oceanic waters.</text>
</comment>
<comment type="PTM">
    <text>Phosphorylated on some or all of the serine and threonine residues present in the C-terminal region.</text>
</comment>
<comment type="similarity">
    <text evidence="3">Belongs to the G-protein coupled receptor 1 family. Opsin subfamily.</text>
</comment>
<name>OPSD1_ANGAN</name>
<protein>
    <recommendedName>
        <fullName>Rhodopsin, deep-sea form</fullName>
    </recommendedName>
</protein>